<accession>P68373</accession>
<accession>P05216</accession>
<accession>Q9CSE9</accession>
<sequence length="449" mass="49909">MRECISIHVGQAGVQIGNACWELYCLEHGIQPDGQMPSDKTIGGGDDSFNTFFSETGAGKHVPRAVFVDLEPTVIDEVRTGTYRQLFHPEQLITGKEDAANNYARGHYTIGKEIIDLVLDRIRKLADQCTGLQGFLVFHSFGGGTGSGFTSLLMERLSVDYGKKSKLEFSIYPAPQVSTAVVEPYNSILTTHTTLEHSDCAFMVDNEAIYDICRRNLDIERPTYTNLNRLISQIVSSITASLRFDGALNVDLTEFQTNLVPYPRIHFPLATYAPVISAEKAYHEQLTVAEITNACFEPANQMVKCDPRHGKYMACCLLYRGDVVPKDVNAAIATIKTKRTIQFVDWCPTGFKVGINYQPPTVVPGGDLAKVQRAVCMLSNTTAIAEAWARLDHKFDLMYAKRAFVHWYVGEGMEEGEFSEAREDMAALEKDYEEVGADSAEGDDEGEEY</sequence>
<gene>
    <name type="primary">Tuba1c</name>
    <name type="synonym">Tuba6</name>
</gene>
<reference key="1">
    <citation type="journal article" date="1986" name="Mol. Cell. Biol.">
        <title>Six mouse alpha-tubulin mRNAs encode five distinct isotypes: testis-specific expression of two sister genes.</title>
        <authorList>
            <person name="Villasante A."/>
            <person name="Wang D."/>
            <person name="Dobner P."/>
            <person name="Dolph P."/>
            <person name="Lewis S.A."/>
            <person name="Cowan N.J."/>
        </authorList>
    </citation>
    <scope>NUCLEOTIDE SEQUENCE [MRNA]</scope>
    <scope>TISSUE SPECIFICITY</scope>
</reference>
<reference key="2">
    <citation type="journal article" date="2004" name="Genome Res.">
        <title>The status, quality, and expansion of the NIH full-length cDNA project: the Mammalian Gene Collection (MGC).</title>
        <authorList>
            <consortium name="The MGC Project Team"/>
        </authorList>
    </citation>
    <scope>NUCLEOTIDE SEQUENCE [LARGE SCALE MRNA]</scope>
    <source>
        <strain>FVB/N</strain>
        <tissue>Liver</tissue>
        <tissue>Mammary tumor</tissue>
    </source>
</reference>
<reference key="3">
    <citation type="journal article" date="2005" name="Science">
        <title>The transcriptional landscape of the mammalian genome.</title>
        <authorList>
            <person name="Carninci P."/>
            <person name="Kasukawa T."/>
            <person name="Katayama S."/>
            <person name="Gough J."/>
            <person name="Frith M.C."/>
            <person name="Maeda N."/>
            <person name="Oyama R."/>
            <person name="Ravasi T."/>
            <person name="Lenhard B."/>
            <person name="Wells C."/>
            <person name="Kodzius R."/>
            <person name="Shimokawa K."/>
            <person name="Bajic V.B."/>
            <person name="Brenner S.E."/>
            <person name="Batalov S."/>
            <person name="Forrest A.R."/>
            <person name="Zavolan M."/>
            <person name="Davis M.J."/>
            <person name="Wilming L.G."/>
            <person name="Aidinis V."/>
            <person name="Allen J.E."/>
            <person name="Ambesi-Impiombato A."/>
            <person name="Apweiler R."/>
            <person name="Aturaliya R.N."/>
            <person name="Bailey T.L."/>
            <person name="Bansal M."/>
            <person name="Baxter L."/>
            <person name="Beisel K.W."/>
            <person name="Bersano T."/>
            <person name="Bono H."/>
            <person name="Chalk A.M."/>
            <person name="Chiu K.P."/>
            <person name="Choudhary V."/>
            <person name="Christoffels A."/>
            <person name="Clutterbuck D.R."/>
            <person name="Crowe M.L."/>
            <person name="Dalla E."/>
            <person name="Dalrymple B.P."/>
            <person name="de Bono B."/>
            <person name="Della Gatta G."/>
            <person name="di Bernardo D."/>
            <person name="Down T."/>
            <person name="Engstrom P."/>
            <person name="Fagiolini M."/>
            <person name="Faulkner G."/>
            <person name="Fletcher C.F."/>
            <person name="Fukushima T."/>
            <person name="Furuno M."/>
            <person name="Futaki S."/>
            <person name="Gariboldi M."/>
            <person name="Georgii-Hemming P."/>
            <person name="Gingeras T.R."/>
            <person name="Gojobori T."/>
            <person name="Green R.E."/>
            <person name="Gustincich S."/>
            <person name="Harbers M."/>
            <person name="Hayashi Y."/>
            <person name="Hensch T.K."/>
            <person name="Hirokawa N."/>
            <person name="Hill D."/>
            <person name="Huminiecki L."/>
            <person name="Iacono M."/>
            <person name="Ikeo K."/>
            <person name="Iwama A."/>
            <person name="Ishikawa T."/>
            <person name="Jakt M."/>
            <person name="Kanapin A."/>
            <person name="Katoh M."/>
            <person name="Kawasawa Y."/>
            <person name="Kelso J."/>
            <person name="Kitamura H."/>
            <person name="Kitano H."/>
            <person name="Kollias G."/>
            <person name="Krishnan S.P."/>
            <person name="Kruger A."/>
            <person name="Kummerfeld S.K."/>
            <person name="Kurochkin I.V."/>
            <person name="Lareau L.F."/>
            <person name="Lazarevic D."/>
            <person name="Lipovich L."/>
            <person name="Liu J."/>
            <person name="Liuni S."/>
            <person name="McWilliam S."/>
            <person name="Madan Babu M."/>
            <person name="Madera M."/>
            <person name="Marchionni L."/>
            <person name="Matsuda H."/>
            <person name="Matsuzawa S."/>
            <person name="Miki H."/>
            <person name="Mignone F."/>
            <person name="Miyake S."/>
            <person name="Morris K."/>
            <person name="Mottagui-Tabar S."/>
            <person name="Mulder N."/>
            <person name="Nakano N."/>
            <person name="Nakauchi H."/>
            <person name="Ng P."/>
            <person name="Nilsson R."/>
            <person name="Nishiguchi S."/>
            <person name="Nishikawa S."/>
            <person name="Nori F."/>
            <person name="Ohara O."/>
            <person name="Okazaki Y."/>
            <person name="Orlando V."/>
            <person name="Pang K.C."/>
            <person name="Pavan W.J."/>
            <person name="Pavesi G."/>
            <person name="Pesole G."/>
            <person name="Petrovsky N."/>
            <person name="Piazza S."/>
            <person name="Reed J."/>
            <person name="Reid J.F."/>
            <person name="Ring B.Z."/>
            <person name="Ringwald M."/>
            <person name="Rost B."/>
            <person name="Ruan Y."/>
            <person name="Salzberg S.L."/>
            <person name="Sandelin A."/>
            <person name="Schneider C."/>
            <person name="Schoenbach C."/>
            <person name="Sekiguchi K."/>
            <person name="Semple C.A."/>
            <person name="Seno S."/>
            <person name="Sessa L."/>
            <person name="Sheng Y."/>
            <person name="Shibata Y."/>
            <person name="Shimada H."/>
            <person name="Shimada K."/>
            <person name="Silva D."/>
            <person name="Sinclair B."/>
            <person name="Sperling S."/>
            <person name="Stupka E."/>
            <person name="Sugiura K."/>
            <person name="Sultana R."/>
            <person name="Takenaka Y."/>
            <person name="Taki K."/>
            <person name="Tammoja K."/>
            <person name="Tan S.L."/>
            <person name="Tang S."/>
            <person name="Taylor M.S."/>
            <person name="Tegner J."/>
            <person name="Teichmann S.A."/>
            <person name="Ueda H.R."/>
            <person name="van Nimwegen E."/>
            <person name="Verardo R."/>
            <person name="Wei C.L."/>
            <person name="Yagi K."/>
            <person name="Yamanishi H."/>
            <person name="Zabarovsky E."/>
            <person name="Zhu S."/>
            <person name="Zimmer A."/>
            <person name="Hide W."/>
            <person name="Bult C."/>
            <person name="Grimmond S.M."/>
            <person name="Teasdale R.D."/>
            <person name="Liu E.T."/>
            <person name="Brusic V."/>
            <person name="Quackenbush J."/>
            <person name="Wahlestedt C."/>
            <person name="Mattick J.S."/>
            <person name="Hume D.A."/>
            <person name="Kai C."/>
            <person name="Sasaki D."/>
            <person name="Tomaru Y."/>
            <person name="Fukuda S."/>
            <person name="Kanamori-Katayama M."/>
            <person name="Suzuki M."/>
            <person name="Aoki J."/>
            <person name="Arakawa T."/>
            <person name="Iida J."/>
            <person name="Imamura K."/>
            <person name="Itoh M."/>
            <person name="Kato T."/>
            <person name="Kawaji H."/>
            <person name="Kawagashira N."/>
            <person name="Kawashima T."/>
            <person name="Kojima M."/>
            <person name="Kondo S."/>
            <person name="Konno H."/>
            <person name="Nakano K."/>
            <person name="Ninomiya N."/>
            <person name="Nishio T."/>
            <person name="Okada M."/>
            <person name="Plessy C."/>
            <person name="Shibata K."/>
            <person name="Shiraki T."/>
            <person name="Suzuki S."/>
            <person name="Tagami M."/>
            <person name="Waki K."/>
            <person name="Watahiki A."/>
            <person name="Okamura-Oho Y."/>
            <person name="Suzuki H."/>
            <person name="Kawai J."/>
            <person name="Hayashizaki Y."/>
        </authorList>
    </citation>
    <scope>NUCLEOTIDE SEQUENCE [LARGE SCALE MRNA] OF 106-449</scope>
    <source>
        <strain>C57BL/6J</strain>
        <tissue>Embryo</tissue>
    </source>
</reference>
<reference key="4">
    <citation type="submission" date="2009-01" db="UniProtKB">
        <authorList>
            <person name="Lubec G."/>
            <person name="Klug S."/>
            <person name="Kang S.U."/>
            <person name="Sunyer B."/>
            <person name="Chen W.-Q."/>
        </authorList>
    </citation>
    <scope>PROTEIN SEQUENCE OF 41-60; 65-79; 85-121; 157-163; 216-280; 312-320; 327-336; 340-370; 374-390; 395-401 AND 403-430</scope>
    <scope>IDENTIFICATION BY MASS SPECTROMETRY</scope>
    <source>
        <strain>C57BL/6J</strain>
        <strain>OF1</strain>
        <tissue>Brain</tissue>
        <tissue>Hippocampus</tissue>
    </source>
</reference>
<reference key="5">
    <citation type="journal article" date="2005" name="Science">
        <title>Tubulin polyglutamylase enzymes are members of the TTL domain protein family.</title>
        <authorList>
            <person name="Janke C."/>
            <person name="Rogowski K."/>
            <person name="Wloga D."/>
            <person name="Regnard C."/>
            <person name="Kajava A.V."/>
            <person name="Strub J.-M."/>
            <person name="Temurak N."/>
            <person name="van Dijk J."/>
            <person name="Boucher D."/>
            <person name="van Dorsselaer A."/>
            <person name="Suryavanshi S."/>
            <person name="Gaertig J."/>
            <person name="Edde B."/>
        </authorList>
    </citation>
    <scope>GLUTAMYLATION</scope>
</reference>
<reference key="6">
    <citation type="journal article" date="2006" name="Biochemistry">
        <title>Endogenously nitrated proteins in mouse brain: links to neurodegenerative disease.</title>
        <authorList>
            <person name="Sacksteder C.A."/>
            <person name="Qian W.-J."/>
            <person name="Knyushko T.V."/>
            <person name="Wang H."/>
            <person name="Chin M.H."/>
            <person name="Lacan G."/>
            <person name="Melega W.P."/>
            <person name="Camp D.G. II"/>
            <person name="Smith R.D."/>
            <person name="Smith D.J."/>
            <person name="Squier T.C."/>
            <person name="Bigelow D.J."/>
        </authorList>
    </citation>
    <scope>NITRATION [LARGE SCALE ANALYSIS] AT TYR-282</scope>
    <scope>IDENTIFICATION BY MASS SPECTROMETRY [LARGE SCALE ANALYSIS]</scope>
    <source>
        <tissue>Brain</tissue>
    </source>
</reference>
<reference key="7">
    <citation type="journal article" date="2009" name="Cell">
        <title>Evolutionary divergence of enzymatic mechanisms for posttranslational polyglycylation.</title>
        <authorList>
            <person name="Rogowski K."/>
            <person name="Juge F."/>
            <person name="van Dijk J."/>
            <person name="Wloga D."/>
            <person name="Strub J.-M."/>
            <person name="Levilliers N."/>
            <person name="Thomas D."/>
            <person name="Bre M.-H."/>
            <person name="Van Dorsselaer A."/>
            <person name="Gaertig J."/>
            <person name="Janke C."/>
        </authorList>
    </citation>
    <scope>GLYCYLATION</scope>
</reference>
<reference key="8">
    <citation type="journal article" date="2006" name="J. Cell Biol.">
        <title>Tubulin tyrosination is a major factor affecting the recruitment of CAP-Gly proteins at microtubule plus ends.</title>
        <authorList>
            <person name="Peris L."/>
            <person name="Thery M."/>
            <person name="Faure J."/>
            <person name="Saoudi Y."/>
            <person name="Lafanechere L."/>
            <person name="Chilton J.K."/>
            <person name="Gordon-Weeks P."/>
            <person name="Galjart N."/>
            <person name="Bornens M."/>
            <person name="Wordeman L."/>
            <person name="Wehland J."/>
            <person name="Andrieux A."/>
            <person name="Job D."/>
        </authorList>
    </citation>
    <scope>TYROSINATION</scope>
</reference>
<reference key="9">
    <citation type="journal article" date="2009" name="J. Cell Biol.">
        <title>Motor-dependent microtubule disassembly driven by tubulin tyrosination.</title>
        <authorList>
            <person name="Peris L."/>
            <person name="Wagenbach M."/>
            <person name="Lafanechere L."/>
            <person name="Brocard J."/>
            <person name="Moore A.T."/>
            <person name="Kozielski F."/>
            <person name="Job D."/>
            <person name="Wordeman L."/>
            <person name="Andrieux A."/>
        </authorList>
    </citation>
    <scope>TYROSINATION</scope>
</reference>
<reference key="10">
    <citation type="journal article" date="2010" name="Cell">
        <title>A tissue-specific atlas of mouse protein phosphorylation and expression.</title>
        <authorList>
            <person name="Huttlin E.L."/>
            <person name="Jedrychowski M.P."/>
            <person name="Elias J.E."/>
            <person name="Goswami T."/>
            <person name="Rad R."/>
            <person name="Beausoleil S.A."/>
            <person name="Villen J."/>
            <person name="Haas W."/>
            <person name="Sowa M.E."/>
            <person name="Gygi S.P."/>
        </authorList>
    </citation>
    <scope>PHOSPHORYLATION [LARGE SCALE ANALYSIS] AT SER-439</scope>
    <scope>IDENTIFICATION BY MASS SPECTROMETRY [LARGE SCALE ANALYSIS]</scope>
    <source>
        <tissue>Brain</tissue>
        <tissue>Brown adipose tissue</tissue>
        <tissue>Kidney</tissue>
        <tissue>Liver</tissue>
        <tissue>Lung</tissue>
        <tissue>Pancreas</tissue>
        <tissue>Spleen</tissue>
        <tissue>Testis</tissue>
    </source>
</reference>
<reference key="11">
    <citation type="journal article" date="2013" name="J. Cell Biol.">
        <title>Tubulin glycylases and glutamylases have distinct functions in stabilization and motility of ependymal cilia.</title>
        <authorList>
            <person name="Bosch Grau M."/>
            <person name="Gonzalez Curto G."/>
            <person name="Rocha C."/>
            <person name="Magiera M.M."/>
            <person name="Marques Sousa P."/>
            <person name="Giordano T."/>
            <person name="Spassky N."/>
            <person name="Janke C."/>
        </authorList>
    </citation>
    <scope>GLYCYLATION</scope>
    <scope>GLUTAMYLATION</scope>
</reference>
<reference key="12">
    <citation type="journal article" date="2015" name="Nat. Commun.">
        <title>Detyrosinated microtubules modulate mechanotransduction in heart and skeletal muscle.</title>
        <authorList>
            <person name="Kerr J.P."/>
            <person name="Robison P."/>
            <person name="Shi G."/>
            <person name="Bogush A.I."/>
            <person name="Kempema A.M."/>
            <person name="Hexum J.K."/>
            <person name="Becerra N."/>
            <person name="Harki D.A."/>
            <person name="Martin S.S."/>
            <person name="Raiteri R."/>
            <person name="Prosser B.L."/>
            <person name="Ward C.W."/>
        </authorList>
    </citation>
    <scope>DETYROSINATION</scope>
</reference>
<reference key="13">
    <citation type="journal article" date="2016" name="Science">
        <title>Detyrosinated microtubules buckle and bear load in contracting cardiomyocytes.</title>
        <authorList>
            <person name="Robison P."/>
            <person name="Caporizzo M.A."/>
            <person name="Ahmadzadeh H."/>
            <person name="Bogush A.I."/>
            <person name="Chen C.Y."/>
            <person name="Margulies K.B."/>
            <person name="Shenoy V.B."/>
            <person name="Prosser B.L."/>
        </authorList>
    </citation>
    <scope>DETYROSINATION</scope>
</reference>
<reference key="14">
    <citation type="journal article" date="2017" name="Science">
        <title>Vasohibins/SVBP are tubulin carboxypeptidases (TCPs) that regulate neuron differentiation.</title>
        <authorList>
            <person name="Aillaud C."/>
            <person name="Bosc C."/>
            <person name="Peris L."/>
            <person name="Bosson A."/>
            <person name="Heemeryck P."/>
            <person name="Van Dijk J."/>
            <person name="Le Friec J."/>
            <person name="Boulan B."/>
            <person name="Vossier F."/>
            <person name="Sanman L.E."/>
            <person name="Syed S."/>
            <person name="Amara N."/>
            <person name="Coute Y."/>
            <person name="Lafanechere L."/>
            <person name="Denarier E."/>
            <person name="Delphin C."/>
            <person name="Pelletier L."/>
            <person name="Humbert S."/>
            <person name="Bogyo M."/>
            <person name="Andrieux A."/>
            <person name="Rogowski K."/>
            <person name="Moutin M.J."/>
        </authorList>
    </citation>
    <scope>DETYROSINATION</scope>
</reference>
<reference key="15">
    <citation type="journal article" date="2021" name="Science">
        <title>Tubulin glycylation controls axonemal dynein activity, flagellar beat, and male fertility.</title>
        <authorList>
            <person name="Gadadhar S."/>
            <person name="Alvarez Viar G."/>
            <person name="Hansen J.N."/>
            <person name="Gong A."/>
            <person name="Kostarev A."/>
            <person name="Ialy-Radio C."/>
            <person name="Leboucher S."/>
            <person name="Whitfield M."/>
            <person name="Ziyyat A."/>
            <person name="Toure A."/>
            <person name="Alvarez L."/>
            <person name="Pigino G."/>
            <person name="Janke C."/>
        </authorList>
    </citation>
    <scope>GLYCYLATION</scope>
</reference>
<feature type="chain" id="PRO_0000048124" description="Tubulin alpha-1C chain">
    <location>
        <begin position="1"/>
        <end position="449"/>
    </location>
</feature>
<feature type="chain" id="PRO_0000437395" description="Detyrosinated tubulin alpha-1C chain" evidence="15 16 17">
    <location>
        <begin position="1"/>
        <end position="448"/>
    </location>
</feature>
<feature type="short sequence motif" description="MREC motif" evidence="1">
    <location>
        <begin position="1"/>
        <end position="4"/>
    </location>
</feature>
<feature type="active site" evidence="1">
    <location>
        <position position="254"/>
    </location>
</feature>
<feature type="binding site" evidence="1">
    <location>
        <position position="11"/>
    </location>
    <ligand>
        <name>GTP</name>
        <dbReference type="ChEBI" id="CHEBI:37565"/>
    </ligand>
</feature>
<feature type="binding site" evidence="1">
    <location>
        <position position="71"/>
    </location>
    <ligand>
        <name>GTP</name>
        <dbReference type="ChEBI" id="CHEBI:37565"/>
    </ligand>
</feature>
<feature type="binding site" evidence="1">
    <location>
        <position position="71"/>
    </location>
    <ligand>
        <name>Mg(2+)</name>
        <dbReference type="ChEBI" id="CHEBI:18420"/>
    </ligand>
</feature>
<feature type="binding site" evidence="1">
    <location>
        <position position="140"/>
    </location>
    <ligand>
        <name>GTP</name>
        <dbReference type="ChEBI" id="CHEBI:37565"/>
    </ligand>
</feature>
<feature type="binding site" evidence="1">
    <location>
        <position position="144"/>
    </location>
    <ligand>
        <name>GTP</name>
        <dbReference type="ChEBI" id="CHEBI:37565"/>
    </ligand>
</feature>
<feature type="binding site" evidence="1">
    <location>
        <position position="145"/>
    </location>
    <ligand>
        <name>GTP</name>
        <dbReference type="ChEBI" id="CHEBI:37565"/>
    </ligand>
</feature>
<feature type="binding site" evidence="1">
    <location>
        <position position="179"/>
    </location>
    <ligand>
        <name>GTP</name>
        <dbReference type="ChEBI" id="CHEBI:37565"/>
    </ligand>
</feature>
<feature type="binding site" evidence="1">
    <location>
        <position position="206"/>
    </location>
    <ligand>
        <name>GTP</name>
        <dbReference type="ChEBI" id="CHEBI:37565"/>
    </ligand>
</feature>
<feature type="binding site" evidence="1">
    <location>
        <position position="228"/>
    </location>
    <ligand>
        <name>GTP</name>
        <dbReference type="ChEBI" id="CHEBI:37565"/>
    </ligand>
</feature>
<feature type="site" description="Involved in polymerization">
    <location>
        <position position="449"/>
    </location>
</feature>
<feature type="modified residue" description="N6-acetyllysine" evidence="3">
    <location>
        <position position="40"/>
    </location>
</feature>
<feature type="modified residue" description="3'-nitrotyrosine" evidence="18">
    <location>
        <position position="282"/>
    </location>
</feature>
<feature type="modified residue" description="Phosphotyrosine" evidence="3">
    <location>
        <position position="432"/>
    </location>
</feature>
<feature type="modified residue" description="Phosphoserine" evidence="19">
    <location>
        <position position="439"/>
    </location>
</feature>
<feature type="modified residue" description="3'-nitrotyrosine" evidence="2">
    <location>
        <position position="449"/>
    </location>
</feature>
<feature type="sequence conflict" description="In Ref. 3; BAB28608." evidence="14" ref="3">
    <original>L</original>
    <variation>P</variation>
    <location>
        <position position="167"/>
    </location>
</feature>
<name>TBA1C_MOUSE</name>
<evidence type="ECO:0000250" key="1">
    <source>
        <dbReference type="UniProtKB" id="P68363"/>
    </source>
</evidence>
<evidence type="ECO:0000250" key="2">
    <source>
        <dbReference type="UniProtKB" id="Q71U36"/>
    </source>
</evidence>
<evidence type="ECO:0000250" key="3">
    <source>
        <dbReference type="UniProtKB" id="Q9BQE3"/>
    </source>
</evidence>
<evidence type="ECO:0000269" key="4">
    <source>
    </source>
</evidence>
<evidence type="ECO:0000269" key="5">
    <source>
    </source>
</evidence>
<evidence type="ECO:0000269" key="6">
    <source>
    </source>
</evidence>
<evidence type="ECO:0000269" key="7">
    <source>
    </source>
</evidence>
<evidence type="ECO:0000269" key="8">
    <source>
    </source>
</evidence>
<evidence type="ECO:0000269" key="9">
    <source>
    </source>
</evidence>
<evidence type="ECO:0000269" key="10">
    <source>
    </source>
</evidence>
<evidence type="ECO:0000269" key="11">
    <source>
    </source>
</evidence>
<evidence type="ECO:0000269" key="12">
    <source>
    </source>
</evidence>
<evidence type="ECO:0000269" key="13">
    <source>
    </source>
</evidence>
<evidence type="ECO:0000305" key="14"/>
<evidence type="ECO:0000305" key="15">
    <source>
    </source>
</evidence>
<evidence type="ECO:0000305" key="16">
    <source>
    </source>
</evidence>
<evidence type="ECO:0000305" key="17">
    <source>
    </source>
</evidence>
<evidence type="ECO:0007744" key="18">
    <source>
    </source>
</evidence>
<evidence type="ECO:0007744" key="19">
    <source>
    </source>
</evidence>
<keyword id="KW-0002">3D-structure</keyword>
<keyword id="KW-0007">Acetylation</keyword>
<keyword id="KW-0963">Cytoplasm</keyword>
<keyword id="KW-0206">Cytoskeleton</keyword>
<keyword id="KW-0903">Direct protein sequencing</keyword>
<keyword id="KW-0342">GTP-binding</keyword>
<keyword id="KW-0378">Hydrolase</keyword>
<keyword id="KW-0460">Magnesium</keyword>
<keyword id="KW-0479">Metal-binding</keyword>
<keyword id="KW-0488">Methylation</keyword>
<keyword id="KW-0493">Microtubule</keyword>
<keyword id="KW-0944">Nitration</keyword>
<keyword id="KW-0547">Nucleotide-binding</keyword>
<keyword id="KW-0597">Phosphoprotein</keyword>
<keyword id="KW-1185">Reference proteome</keyword>
<comment type="function">
    <text>Tubulin is the major constituent of microtubules, a cylinder consisting of laterally associated linear protofilaments composed of alpha- and beta-tubulin heterodimers. Microtubules grow by the addition of GTP-tubulin dimers to the microtubule end, where a stabilizing cap forms. Below the cap, tubulin dimers are in GDP-bound state, owing to GTPase activity of alpha-tubulin.</text>
</comment>
<comment type="catalytic activity">
    <reaction evidence="1">
        <text>GTP + H2O = GDP + phosphate + H(+)</text>
        <dbReference type="Rhea" id="RHEA:19669"/>
        <dbReference type="ChEBI" id="CHEBI:15377"/>
        <dbReference type="ChEBI" id="CHEBI:15378"/>
        <dbReference type="ChEBI" id="CHEBI:37565"/>
        <dbReference type="ChEBI" id="CHEBI:43474"/>
        <dbReference type="ChEBI" id="CHEBI:58189"/>
    </reaction>
    <physiologicalReaction direction="left-to-right" evidence="1">
        <dbReference type="Rhea" id="RHEA:19670"/>
    </physiologicalReaction>
</comment>
<comment type="cofactor">
    <cofactor evidence="1">
        <name>Mg(2+)</name>
        <dbReference type="ChEBI" id="CHEBI:18420"/>
    </cofactor>
</comment>
<comment type="subunit">
    <text>Dimer of alpha and beta chains. A typical microtubule is a hollow water-filled tube with an outer diameter of 25 nm and an inner diameter of 15 nM. Alpha-beta heterodimers associate head-to-tail to form protofilaments running lengthwise along the microtubule wall with the beta-tubulin subunit facing the microtubule plus end conferring a structural polarity. Microtubules usually have 13 protofilaments but different protofilament numbers can be found in some organisms and specialized cells.</text>
</comment>
<comment type="subcellular location">
    <subcellularLocation>
        <location>Cytoplasm</location>
        <location>Cytoskeleton</location>
    </subcellularLocation>
</comment>
<comment type="tissue specificity">
    <text evidence="13">Minor alpha-tubulin expressed in all tissues.</text>
</comment>
<comment type="domain">
    <text evidence="1">The MREC motif may be critical for tubulin autoregulation.</text>
</comment>
<comment type="PTM">
    <text evidence="6 8 12">Some glutamate residues at the C-terminus are polyglycylated, resulting in polyglycine chains on the gamma-carboxyl group. Glycylation is mainly limited to tubulin incorporated into axonemes (cilia and flagella) whereas glutamylation is prevalent in neuronal cells, centrioles, axonemes, and the mitotic spindle. Both modifications can coexist on the same protein on adjacent residues, and lowering polyglycylation levels increases polyglutamylation, and reciprocally. Cilia and flagella glycylation is required for their stability and maintenance. Flagella glycylation controls sperm motility (PubMed:33414192).</text>
</comment>
<comment type="PTM">
    <text evidence="2 4 8">Some glutamate residues at the C-terminus are polyglutamylated, resulting in polyglutamate chains on the gamma-carboxyl group (PubMed:15890843). Polyglutamylation plays a key role in microtubule severing by spastin (SPAST). SPAST preferentially recognizes and acts on microtubules decorated with short polyglutamate tails: severing activity by SPAST increases as the number of glutamates per tubulin rises from one to eight, but decreases beyond this glutamylation threshold (By similarity). Glutamylation is also involved in cilia motility (PubMed:23897886).</text>
</comment>
<comment type="PTM">
    <text evidence="2">Acetylation of alpha chains at Lys-40 is located inside the microtubule lumen. This modification has been correlated with increased microtubule stability, intracellular transport and ciliary assembly.</text>
</comment>
<comment type="PTM">
    <text evidence="1">Methylation of alpha chains at Lys-40 is found in mitotic microtubules and is required for normal mitosis and cytokinesis contributing to genomic stability.</text>
</comment>
<comment type="PTM">
    <text evidence="2">Nitration of Tyr-449 is irreversible and interferes with normal dynein intracellular distribution.</text>
</comment>
<comment type="PTM">
    <text evidence="5 7 9 10 11">Undergoes a tyrosination/detyrosination cycle, the cyclic removal and re-addition of a C-terminal tyrosine residue by the enzymes tubulin tyrosine carboxypeptidase (MATCAP1, VASH1 or VASH2) and tubulin tyrosine ligase (TTL), respectively.</text>
</comment>
<comment type="PTM">
    <molecule>Tubulin alpha-1C chain</molecule>
    <text evidence="2 5 7">Tyrosination promotes microtubule interaction with CAP-Gly domain-containing proteins such as CLIP1, CLIP2 and DCTN1 (PubMed:16954346, PubMed:19564401). Tyrosination regulates the initiation of dynein-dynactin motility via interaction with DCTN1, which brings the dynein-dynactin complex into contact with microtubules. In neurons, tyrosinated tubulins mediate the initiation of retrograde vesicle transport (By similarity).</text>
</comment>
<comment type="PTM">
    <molecule>Detyrosinated tubulin alpha-1C chain</molecule>
    <text evidence="3 9 10">Detyrosination is involved in metaphase plate congression by guiding chromosomes during mitosis: detyrosination promotes interaction with CENPE, promoting pole-proximal transport of chromosomes toward the equator (By similarity). Detyrosination increases microtubules-dependent mechanotransduction in dystrophic cardiac and skeletal muscle (PubMed:26446751). In cardiomyocytes, detyrosinated microtubules are required to resist to contractile compression during contraction: detyrosination promotes association with desmin (DES) at force-generating sarcomeres, leading to buckled microtubules and mechanical resistance to contraction (PubMed:27102488).</text>
</comment>
<comment type="similarity">
    <text evidence="14">Belongs to the tubulin family.</text>
</comment>
<proteinExistence type="evidence at protein level"/>
<dbReference type="EC" id="3.6.5.-" evidence="1"/>
<dbReference type="EMBL" id="M13441">
    <property type="protein sequence ID" value="AAA40503.1"/>
    <property type="molecule type" value="mRNA"/>
</dbReference>
<dbReference type="EMBL" id="BC004745">
    <property type="protein sequence ID" value="AAH04745.1"/>
    <property type="molecule type" value="mRNA"/>
</dbReference>
<dbReference type="EMBL" id="BC022182">
    <property type="protein sequence ID" value="AAH22182.1"/>
    <property type="molecule type" value="mRNA"/>
</dbReference>
<dbReference type="EMBL" id="BC026753">
    <property type="protein sequence ID" value="AAH26753.1"/>
    <property type="molecule type" value="mRNA"/>
</dbReference>
<dbReference type="EMBL" id="AK013029">
    <property type="protein sequence ID" value="BAB28608.1"/>
    <property type="molecule type" value="mRNA"/>
</dbReference>
<dbReference type="CCDS" id="CCDS37198.1"/>
<dbReference type="PIR" id="I77428">
    <property type="entry name" value="I77428"/>
</dbReference>
<dbReference type="PIR" id="PH0108">
    <property type="entry name" value="PH0108"/>
</dbReference>
<dbReference type="RefSeq" id="NP_033474.1">
    <property type="nucleotide sequence ID" value="NM_009448.4"/>
</dbReference>
<dbReference type="PDB" id="8IXD">
    <property type="method" value="EM"/>
    <property type="resolution" value="4.40 A"/>
    <property type="chains" value="A/B/C/D/E/F/G/H/I=1-449"/>
</dbReference>
<dbReference type="PDB" id="8IXE">
    <property type="method" value="EM"/>
    <property type="resolution" value="4.40 A"/>
    <property type="chains" value="B/H/J/K=1-449"/>
</dbReference>
<dbReference type="PDBsum" id="8IXD"/>
<dbReference type="PDBsum" id="8IXE"/>
<dbReference type="EMDB" id="EMD-35791"/>
<dbReference type="SMR" id="P68373"/>
<dbReference type="BioGRID" id="204376">
    <property type="interactions" value="18"/>
</dbReference>
<dbReference type="FunCoup" id="P68373">
    <property type="interactions" value="1450"/>
</dbReference>
<dbReference type="IntAct" id="P68373">
    <property type="interactions" value="12"/>
</dbReference>
<dbReference type="STRING" id="10090.ENSMUSP00000051033"/>
<dbReference type="GlyGen" id="P68373">
    <property type="glycosylation" value="2 sites, 1 N-linked glycan (1 site), 1 O-linked glycan (1 site)"/>
</dbReference>
<dbReference type="iPTMnet" id="P68373"/>
<dbReference type="PhosphoSitePlus" id="P68373"/>
<dbReference type="SwissPalm" id="P68373"/>
<dbReference type="REPRODUCTION-2DPAGE" id="P68373"/>
<dbReference type="jPOST" id="P68373"/>
<dbReference type="PaxDb" id="10090-ENSMUSP00000051033"/>
<dbReference type="PeptideAtlas" id="P68373"/>
<dbReference type="ProteomicsDB" id="263128"/>
<dbReference type="Pumba" id="P68373"/>
<dbReference type="TopDownProteomics" id="P68373"/>
<dbReference type="Ensembl" id="ENSMUST00000058914.10">
    <property type="protein sequence ID" value="ENSMUSP00000051033.9"/>
    <property type="gene ID" value="ENSMUSG00000043091.10"/>
</dbReference>
<dbReference type="GeneID" id="22146"/>
<dbReference type="KEGG" id="mmu:22146"/>
<dbReference type="UCSC" id="uc007xom.1">
    <property type="organism name" value="mouse"/>
</dbReference>
<dbReference type="AGR" id="MGI:1095409"/>
<dbReference type="CTD" id="84790"/>
<dbReference type="MGI" id="MGI:1095409">
    <property type="gene designation" value="Tuba1c"/>
</dbReference>
<dbReference type="VEuPathDB" id="HostDB:ENSMUSG00000043091"/>
<dbReference type="eggNOG" id="KOG1376">
    <property type="taxonomic scope" value="Eukaryota"/>
</dbReference>
<dbReference type="GeneTree" id="ENSGT00950000182825"/>
<dbReference type="HOGENOM" id="CLU_015718_0_0_1"/>
<dbReference type="InParanoid" id="P68373"/>
<dbReference type="OMA" id="PEGTHIN"/>
<dbReference type="OrthoDB" id="1844at2759"/>
<dbReference type="PhylomeDB" id="P68373"/>
<dbReference type="TreeFam" id="TF300314"/>
<dbReference type="Reactome" id="R-MMU-190840">
    <property type="pathway name" value="Microtubule-dependent trafficking of connexons from Golgi to the plasma membrane"/>
</dbReference>
<dbReference type="Reactome" id="R-MMU-2132295">
    <property type="pathway name" value="MHC class II antigen presentation"/>
</dbReference>
<dbReference type="Reactome" id="R-MMU-2467813">
    <property type="pathway name" value="Separation of Sister Chromatids"/>
</dbReference>
<dbReference type="Reactome" id="R-MMU-2500257">
    <property type="pathway name" value="Resolution of Sister Chromatid Cohesion"/>
</dbReference>
<dbReference type="Reactome" id="R-MMU-3371497">
    <property type="pathway name" value="HSP90 chaperone cycle for steroid hormone receptors (SHR) in the presence of ligand"/>
</dbReference>
<dbReference type="Reactome" id="R-MMU-380320">
    <property type="pathway name" value="Recruitment of NuMA to mitotic centrosomes"/>
</dbReference>
<dbReference type="Reactome" id="R-MMU-437239">
    <property type="pathway name" value="Recycling pathway of L1"/>
</dbReference>
<dbReference type="Reactome" id="R-MMU-5610787">
    <property type="pathway name" value="Hedgehog 'off' state"/>
</dbReference>
<dbReference type="Reactome" id="R-MMU-5617833">
    <property type="pathway name" value="Cilium Assembly"/>
</dbReference>
<dbReference type="Reactome" id="R-MMU-5620924">
    <property type="pathway name" value="Intraflagellar transport"/>
</dbReference>
<dbReference type="Reactome" id="R-MMU-5626467">
    <property type="pathway name" value="RHO GTPases activate IQGAPs"/>
</dbReference>
<dbReference type="Reactome" id="R-MMU-5663220">
    <property type="pathway name" value="RHO GTPases Activate Formins"/>
</dbReference>
<dbReference type="Reactome" id="R-MMU-6807878">
    <property type="pathway name" value="COPI-mediated anterograde transport"/>
</dbReference>
<dbReference type="Reactome" id="R-MMU-6811434">
    <property type="pathway name" value="COPI-dependent Golgi-to-ER retrograde traffic"/>
</dbReference>
<dbReference type="Reactome" id="R-MMU-6811436">
    <property type="pathway name" value="COPI-independent Golgi-to-ER retrograde traffic"/>
</dbReference>
<dbReference type="Reactome" id="R-MMU-68877">
    <property type="pathway name" value="Mitotic Prometaphase"/>
</dbReference>
<dbReference type="Reactome" id="R-MMU-8852276">
    <property type="pathway name" value="The role of GTSE1 in G2/M progression after G2 checkpoint"/>
</dbReference>
<dbReference type="Reactome" id="R-MMU-8955332">
    <property type="pathway name" value="Carboxyterminal post-translational modifications of tubulin"/>
</dbReference>
<dbReference type="Reactome" id="R-MMU-9646399">
    <property type="pathway name" value="Aggrephagy"/>
</dbReference>
<dbReference type="Reactome" id="R-MMU-9648025">
    <property type="pathway name" value="EML4 and NUDC in mitotic spindle formation"/>
</dbReference>
<dbReference type="Reactome" id="R-MMU-9668328">
    <property type="pathway name" value="Sealing of the nuclear envelope (NE) by ESCRT-III"/>
</dbReference>
<dbReference type="Reactome" id="R-MMU-983189">
    <property type="pathway name" value="Kinesins"/>
</dbReference>
<dbReference type="Reactome" id="R-MMU-9833482">
    <property type="pathway name" value="PKR-mediated signaling"/>
</dbReference>
<dbReference type="BioGRID-ORCS" id="22146">
    <property type="hits" value="15 hits in 47 CRISPR screens"/>
</dbReference>
<dbReference type="ChiTaRS" id="Tuba1c">
    <property type="organism name" value="mouse"/>
</dbReference>
<dbReference type="PRO" id="PR:P68373"/>
<dbReference type="Proteomes" id="UP000000589">
    <property type="component" value="Chromosome 15"/>
</dbReference>
<dbReference type="RNAct" id="P68373">
    <property type="molecule type" value="protein"/>
</dbReference>
<dbReference type="Bgee" id="ENSMUSG00000043091">
    <property type="expression patterns" value="Expressed in ectoplacental cone and 212 other cell types or tissues"/>
</dbReference>
<dbReference type="ExpressionAtlas" id="P68373">
    <property type="expression patterns" value="baseline and differential"/>
</dbReference>
<dbReference type="GO" id="GO:0005929">
    <property type="term" value="C:cilium"/>
    <property type="evidence" value="ECO:0007669"/>
    <property type="project" value="Ensembl"/>
</dbReference>
<dbReference type="GO" id="GO:0005881">
    <property type="term" value="C:cytoplasmic microtubule"/>
    <property type="evidence" value="ECO:0000314"/>
    <property type="project" value="MGI"/>
</dbReference>
<dbReference type="GO" id="GO:0005634">
    <property type="term" value="C:nucleus"/>
    <property type="evidence" value="ECO:0007669"/>
    <property type="project" value="Ensembl"/>
</dbReference>
<dbReference type="GO" id="GO:0005525">
    <property type="term" value="F:GTP binding"/>
    <property type="evidence" value="ECO:0007669"/>
    <property type="project" value="UniProtKB-KW"/>
</dbReference>
<dbReference type="GO" id="GO:0016787">
    <property type="term" value="F:hydrolase activity"/>
    <property type="evidence" value="ECO:0007669"/>
    <property type="project" value="UniProtKB-KW"/>
</dbReference>
<dbReference type="GO" id="GO:0046872">
    <property type="term" value="F:metal ion binding"/>
    <property type="evidence" value="ECO:0007669"/>
    <property type="project" value="UniProtKB-KW"/>
</dbReference>
<dbReference type="GO" id="GO:0005200">
    <property type="term" value="F:structural constituent of cytoskeleton"/>
    <property type="evidence" value="ECO:0007669"/>
    <property type="project" value="InterPro"/>
</dbReference>
<dbReference type="GO" id="GO:0007017">
    <property type="term" value="P:microtubule-based process"/>
    <property type="evidence" value="ECO:0007669"/>
    <property type="project" value="InterPro"/>
</dbReference>
<dbReference type="CDD" id="cd02186">
    <property type="entry name" value="alpha_tubulin"/>
    <property type="match status" value="1"/>
</dbReference>
<dbReference type="FunFam" id="1.10.287.600:FF:000005">
    <property type="entry name" value="Tubulin alpha chain"/>
    <property type="match status" value="1"/>
</dbReference>
<dbReference type="FunFam" id="3.30.1330.20:FF:000001">
    <property type="entry name" value="Tubulin alpha chain"/>
    <property type="match status" value="1"/>
</dbReference>
<dbReference type="FunFam" id="3.40.50.1440:FF:000002">
    <property type="entry name" value="Tubulin alpha chain"/>
    <property type="match status" value="1"/>
</dbReference>
<dbReference type="Gene3D" id="1.10.287.600">
    <property type="entry name" value="Helix hairpin bin"/>
    <property type="match status" value="1"/>
</dbReference>
<dbReference type="Gene3D" id="3.30.1330.20">
    <property type="entry name" value="Tubulin/FtsZ, C-terminal domain"/>
    <property type="match status" value="1"/>
</dbReference>
<dbReference type="Gene3D" id="3.40.50.1440">
    <property type="entry name" value="Tubulin/FtsZ, GTPase domain"/>
    <property type="match status" value="1"/>
</dbReference>
<dbReference type="InterPro" id="IPR002452">
    <property type="entry name" value="Alpha_tubulin"/>
</dbReference>
<dbReference type="InterPro" id="IPR008280">
    <property type="entry name" value="Tub_FtsZ_C"/>
</dbReference>
<dbReference type="InterPro" id="IPR000217">
    <property type="entry name" value="Tubulin"/>
</dbReference>
<dbReference type="InterPro" id="IPR037103">
    <property type="entry name" value="Tubulin/FtsZ-like_C"/>
</dbReference>
<dbReference type="InterPro" id="IPR018316">
    <property type="entry name" value="Tubulin/FtsZ_2-layer-sand-dom"/>
</dbReference>
<dbReference type="InterPro" id="IPR036525">
    <property type="entry name" value="Tubulin/FtsZ_GTPase_sf"/>
</dbReference>
<dbReference type="InterPro" id="IPR023123">
    <property type="entry name" value="Tubulin_C"/>
</dbReference>
<dbReference type="InterPro" id="IPR017975">
    <property type="entry name" value="Tubulin_CS"/>
</dbReference>
<dbReference type="InterPro" id="IPR003008">
    <property type="entry name" value="Tubulin_FtsZ_GTPase"/>
</dbReference>
<dbReference type="PANTHER" id="PTHR11588">
    <property type="entry name" value="TUBULIN"/>
    <property type="match status" value="1"/>
</dbReference>
<dbReference type="Pfam" id="PF00091">
    <property type="entry name" value="Tubulin"/>
    <property type="match status" value="1"/>
</dbReference>
<dbReference type="Pfam" id="PF03953">
    <property type="entry name" value="Tubulin_C"/>
    <property type="match status" value="1"/>
</dbReference>
<dbReference type="PRINTS" id="PR01162">
    <property type="entry name" value="ALPHATUBULIN"/>
</dbReference>
<dbReference type="PRINTS" id="PR01161">
    <property type="entry name" value="TUBULIN"/>
</dbReference>
<dbReference type="SMART" id="SM00864">
    <property type="entry name" value="Tubulin"/>
    <property type="match status" value="1"/>
</dbReference>
<dbReference type="SMART" id="SM00865">
    <property type="entry name" value="Tubulin_C"/>
    <property type="match status" value="1"/>
</dbReference>
<dbReference type="SUPFAM" id="SSF55307">
    <property type="entry name" value="Tubulin C-terminal domain-like"/>
    <property type="match status" value="1"/>
</dbReference>
<dbReference type="SUPFAM" id="SSF52490">
    <property type="entry name" value="Tubulin nucleotide-binding domain-like"/>
    <property type="match status" value="1"/>
</dbReference>
<dbReference type="PROSITE" id="PS00227">
    <property type="entry name" value="TUBULIN"/>
    <property type="match status" value="1"/>
</dbReference>
<organism>
    <name type="scientific">Mus musculus</name>
    <name type="common">Mouse</name>
    <dbReference type="NCBI Taxonomy" id="10090"/>
    <lineage>
        <taxon>Eukaryota</taxon>
        <taxon>Metazoa</taxon>
        <taxon>Chordata</taxon>
        <taxon>Craniata</taxon>
        <taxon>Vertebrata</taxon>
        <taxon>Euteleostomi</taxon>
        <taxon>Mammalia</taxon>
        <taxon>Eutheria</taxon>
        <taxon>Euarchontoglires</taxon>
        <taxon>Glires</taxon>
        <taxon>Rodentia</taxon>
        <taxon>Myomorpha</taxon>
        <taxon>Muroidea</taxon>
        <taxon>Muridae</taxon>
        <taxon>Murinae</taxon>
        <taxon>Mus</taxon>
        <taxon>Mus</taxon>
    </lineage>
</organism>
<protein>
    <recommendedName>
        <fullName>Tubulin alpha-1C chain</fullName>
        <ecNumber evidence="1">3.6.5.-</ecNumber>
    </recommendedName>
    <alternativeName>
        <fullName>Alpha-tubulin 6</fullName>
    </alternativeName>
    <alternativeName>
        <fullName>Alpha-tubulin isotype M-alpha-6</fullName>
    </alternativeName>
    <alternativeName>
        <fullName>Tubulin alpha-6 chain</fullName>
    </alternativeName>
    <component>
        <recommendedName>
            <fullName>Detyrosinated tubulin alpha-1C chain</fullName>
        </recommendedName>
    </component>
</protein>